<gene>
    <name evidence="1 4" type="primary">raf1</name>
    <name type="ordered locus">tlr1766</name>
</gene>
<evidence type="ECO:0000255" key="1">
    <source>
        <dbReference type="HAMAP-Rule" id="MF_00856"/>
    </source>
</evidence>
<evidence type="ECO:0000269" key="2">
    <source>
    </source>
</evidence>
<evidence type="ECO:0000269" key="3">
    <source>
    </source>
</evidence>
<evidence type="ECO:0000303" key="4">
    <source>
    </source>
</evidence>
<evidence type="ECO:0000305" key="5">
    <source>
    </source>
</evidence>
<keyword id="KW-0120">Carbon dioxide fixation</keyword>
<keyword id="KW-0143">Chaperone</keyword>
<keyword id="KW-0963">Cytoplasm</keyword>
<keyword id="KW-0602">Photosynthesis</keyword>
<keyword id="KW-1185">Reference proteome</keyword>
<feature type="chain" id="PRO_0000451580" description="RuBisCO accumulation factor 1">
    <location>
        <begin position="1"/>
        <end position="356"/>
    </location>
</feature>
<feature type="region of interest" description="N-terminal alpha-helix" evidence="1">
    <location>
        <begin position="7"/>
        <end position="185"/>
    </location>
</feature>
<feature type="region of interest" description="C-terminal beta-sheet" evidence="1">
    <location>
        <begin position="209"/>
        <end position="342"/>
    </location>
</feature>
<proteinExistence type="evidence at protein level"/>
<accession>Q8DI26</accession>
<protein>
    <recommendedName>
        <fullName evidence="1 4">RuBisCO accumulation factor 1</fullName>
    </recommendedName>
</protein>
<dbReference type="EMBL" id="BA000039">
    <property type="protein sequence ID" value="BAC09318.1"/>
    <property type="molecule type" value="Genomic_DNA"/>
</dbReference>
<dbReference type="RefSeq" id="NP_682556.1">
    <property type="nucleotide sequence ID" value="NC_004113.1"/>
</dbReference>
<dbReference type="RefSeq" id="WP_011057603.1">
    <property type="nucleotide sequence ID" value="NC_004113.1"/>
</dbReference>
<dbReference type="SMR" id="Q8DI26"/>
<dbReference type="IntAct" id="Q8DI26">
    <property type="interactions" value="1"/>
</dbReference>
<dbReference type="MINT" id="Q8DI26"/>
<dbReference type="STRING" id="197221.gene:10748371"/>
<dbReference type="EnsemblBacteria" id="BAC09318">
    <property type="protein sequence ID" value="BAC09318"/>
    <property type="gene ID" value="BAC09318"/>
</dbReference>
<dbReference type="KEGG" id="tel:tlr1766"/>
<dbReference type="PATRIC" id="fig|197221.4.peg.1847"/>
<dbReference type="eggNOG" id="ENOG502Z7IG">
    <property type="taxonomic scope" value="Bacteria"/>
</dbReference>
<dbReference type="Proteomes" id="UP000000440">
    <property type="component" value="Chromosome"/>
</dbReference>
<dbReference type="GO" id="GO:0005737">
    <property type="term" value="C:cytoplasm"/>
    <property type="evidence" value="ECO:0007669"/>
    <property type="project" value="UniProtKB-SubCell"/>
</dbReference>
<dbReference type="GO" id="GO:0015977">
    <property type="term" value="P:carbon fixation"/>
    <property type="evidence" value="ECO:0007669"/>
    <property type="project" value="UniProtKB-UniRule"/>
</dbReference>
<dbReference type="GO" id="GO:0015979">
    <property type="term" value="P:photosynthesis"/>
    <property type="evidence" value="ECO:0007669"/>
    <property type="project" value="UniProtKB-KW"/>
</dbReference>
<dbReference type="GO" id="GO:0110102">
    <property type="term" value="P:ribulose bisphosphate carboxylase complex assembly"/>
    <property type="evidence" value="ECO:0000314"/>
    <property type="project" value="UniProtKB"/>
</dbReference>
<dbReference type="HAMAP" id="MF_00856">
    <property type="entry name" value="Raf1"/>
    <property type="match status" value="1"/>
</dbReference>
<dbReference type="InterPro" id="IPR037494">
    <property type="entry name" value="RAF1"/>
</dbReference>
<dbReference type="InterPro" id="IPR040858">
    <property type="entry name" value="Raf1_C"/>
</dbReference>
<dbReference type="InterPro" id="IPR046382">
    <property type="entry name" value="Raf1_cyn"/>
</dbReference>
<dbReference type="InterPro" id="IPR040781">
    <property type="entry name" value="Raf1_HTH"/>
</dbReference>
<dbReference type="InterPro" id="IPR041358">
    <property type="entry name" value="Raf1_N"/>
</dbReference>
<dbReference type="PANTHER" id="PTHR35299">
    <property type="entry name" value="RUBISCO ACCUMULATION FACTOR 1"/>
    <property type="match status" value="1"/>
</dbReference>
<dbReference type="PANTHER" id="PTHR35299:SF6">
    <property type="entry name" value="RUBISCO ACCUMULATION FACTOR 1"/>
    <property type="match status" value="1"/>
</dbReference>
<dbReference type="Pfam" id="PF18579">
    <property type="entry name" value="Raf1_HTH"/>
    <property type="match status" value="1"/>
</dbReference>
<dbReference type="Pfam" id="PF18578">
    <property type="entry name" value="Raf1_N"/>
    <property type="match status" value="1"/>
</dbReference>
<dbReference type="Pfam" id="PF18087">
    <property type="entry name" value="RuBisCo_chap_C"/>
    <property type="match status" value="1"/>
</dbReference>
<organism>
    <name type="scientific">Thermosynechococcus vestitus (strain NIES-2133 / IAM M-273 / BP-1)</name>
    <dbReference type="NCBI Taxonomy" id="197221"/>
    <lineage>
        <taxon>Bacteria</taxon>
        <taxon>Bacillati</taxon>
        <taxon>Cyanobacteriota</taxon>
        <taxon>Cyanophyceae</taxon>
        <taxon>Acaryochloridales</taxon>
        <taxon>Thermosynechococcaceae</taxon>
        <taxon>Thermosynechococcus</taxon>
    </lineage>
</organism>
<reference key="1">
    <citation type="journal article" date="2002" name="DNA Res.">
        <title>Complete genome structure of the thermophilic cyanobacterium Thermosynechococcus elongatus BP-1.</title>
        <authorList>
            <person name="Nakamura Y."/>
            <person name="Kaneko T."/>
            <person name="Sato S."/>
            <person name="Ikeuchi M."/>
            <person name="Katoh H."/>
            <person name="Sasamoto S."/>
            <person name="Watanabe A."/>
            <person name="Iriguchi M."/>
            <person name="Kawashima K."/>
            <person name="Kimura T."/>
            <person name="Kishida Y."/>
            <person name="Kiyokawa C."/>
            <person name="Kohara M."/>
            <person name="Matsumoto M."/>
            <person name="Matsuno A."/>
            <person name="Nakazaki N."/>
            <person name="Shimpo S."/>
            <person name="Sugimoto M."/>
            <person name="Takeuchi C."/>
            <person name="Yamada M."/>
            <person name="Tabata S."/>
        </authorList>
    </citation>
    <scope>NUCLEOTIDE SEQUENCE [LARGE SCALE GENOMIC DNA]</scope>
    <source>
        <strain>NIES-2133 / IAM M-273 / BP-1</strain>
    </source>
</reference>
<reference key="2">
    <citation type="journal article" date="2014" name="FEBS J.">
        <title>Rubisco Accumulation Factor 1 from Thermosynechococcus elongatus participates in the final stages of ribulose-1,5-bisphosphate carboxylase/oxygenase assembly in Escherichia coli cells and in vitro.</title>
        <authorList>
            <person name="Kolesinski P."/>
            <person name="Belusiak I."/>
            <person name="Czarnocki-Cieciura M."/>
            <person name="Szczepaniak A."/>
        </authorList>
    </citation>
    <scope>FUNCTION</scope>
    <scope>INTERACTION WITH RBCL</scope>
    <scope>SUBCELLULAR LOCATION</scope>
    <source>
        <strain>NIES-2133 / IAM M-273 / BP-1</strain>
    </source>
</reference>
<sequence>MSQDQDALTTEVLQRLRRKEGTWQDWGAGCRQLQKQGLSPQAIFEATGIEPIHQNQLITALQVSQSLGEAPESVRAYFQTRGSDLLYELRVLSAGDRLAAATLIVEKQLDVTAVHEVCRALKAVSYRKDNSEGFGESVGDRIGRYYWQLARQQRDLAQRSRLIAQGLRFVESASGRQALEKLLTDFTVVPAVNQPRLPLYRLDTAEEVPYLVPVAGTAPLTATVLQQVPRLSCTEVFRVVAVPQGMSLVALPAWQVLLNAVDPVAILWPAADLPAELPPSPEGLPIAQVLLVVDRGLAEWDRDRYLLIAPSPSEAVQLAWLPEPPTATVVGQLLLVLRPPQVLDESLNRELWFFEE</sequence>
<name>RAF1_THEVB</name>
<comment type="function">
    <text evidence="1">A major RuBisCO chaperone. Acts after GroEL-GroES chaperonin to fold and/or assemble the large subunit of RuBisCO (ccbL, rbcL). Cooperates with RbcX in RbcL folding, plays the major role in assembly of dimers into RbcL(8)-Raf1(8) intermediate complexes. RbcS replaces Raf1, leading to holoenzyme formation.</text>
</comment>
<comment type="function">
    <text evidence="3">Required for optimal reconstitution of RuBisCO upon expression of rbcL-rbcS subunits in E.coli. Only interacts with the large subunit (cbbL, rbcL). Probably acts in the final stages of RuBisCO assembly, possibly participating in the addition of the small subunit (ccbS, rbcS).</text>
</comment>
<comment type="subunit">
    <text evidence="1 5">Homodimer. Forms an RbcL(8)-Raf1(8) complex. Forms complexes of many stoichiometries with RbcL with and without RbcS. RbcX and Raf1 can bind simultaneously to RbcL.</text>
</comment>
<comment type="interaction">
    <interactant intactId="EBI-9639332">
        <id>Q8DI26</id>
    </interactant>
    <interactant intactId="EBI-9639313">
        <id>Q8DIS5</id>
        <label>cbbL</label>
    </interactant>
    <organismsDiffer>false</organismsDiffer>
    <experiments>2</experiments>
</comment>
<comment type="subcellular location">
    <subcellularLocation>
        <location evidence="1 3">Cytoplasm</location>
    </subcellularLocation>
    <text evidence="2">Interacts with the large subunit of RuBisCO in the cytoplasm.</text>
</comment>
<comment type="domain">
    <text evidence="1">Has 3 domains, the N-terminal alpha-helical domain, an extended flexible linker and the C-terminal beta-sheet domain. The 2 C-terminal beta-sheet domains are swapped and pack against each other to form the dimer interface.</text>
</comment>
<comment type="similarity">
    <text evidence="1">Belongs to the RAF family.</text>
</comment>